<organism>
    <name type="scientific">Staphylococcus saprophyticus subsp. saprophyticus (strain ATCC 15305 / DSM 20229 / NCIMB 8711 / NCTC 7292 / S-41)</name>
    <dbReference type="NCBI Taxonomy" id="342451"/>
    <lineage>
        <taxon>Bacteria</taxon>
        <taxon>Bacillati</taxon>
        <taxon>Bacillota</taxon>
        <taxon>Bacilli</taxon>
        <taxon>Bacillales</taxon>
        <taxon>Staphylococcaceae</taxon>
        <taxon>Staphylococcus</taxon>
    </lineage>
</organism>
<dbReference type="EC" id="1.10.3.-"/>
<dbReference type="EMBL" id="AP008934">
    <property type="protein sequence ID" value="BAE18878.1"/>
    <property type="molecule type" value="Genomic_DNA"/>
</dbReference>
<dbReference type="RefSeq" id="WP_011303445.1">
    <property type="nucleotide sequence ID" value="NC_007350.1"/>
</dbReference>
<dbReference type="SMR" id="Q49WI1"/>
<dbReference type="GeneID" id="3616642"/>
<dbReference type="KEGG" id="ssp:SSP1733"/>
<dbReference type="PATRIC" id="fig|342451.11.peg.1732"/>
<dbReference type="eggNOG" id="COG3125">
    <property type="taxonomic scope" value="Bacteria"/>
</dbReference>
<dbReference type="HOGENOM" id="CLU_140945_2_0_9"/>
<dbReference type="OrthoDB" id="2361460at2"/>
<dbReference type="Proteomes" id="UP000006371">
    <property type="component" value="Chromosome"/>
</dbReference>
<dbReference type="GO" id="GO:0009319">
    <property type="term" value="C:cytochrome o ubiquinol oxidase complex"/>
    <property type="evidence" value="ECO:0007669"/>
    <property type="project" value="TreeGrafter"/>
</dbReference>
<dbReference type="GO" id="GO:0005886">
    <property type="term" value="C:plasma membrane"/>
    <property type="evidence" value="ECO:0007669"/>
    <property type="project" value="UniProtKB-SubCell"/>
</dbReference>
<dbReference type="GO" id="GO:0009486">
    <property type="term" value="F:cytochrome bo3 ubiquinol oxidase activity"/>
    <property type="evidence" value="ECO:0007669"/>
    <property type="project" value="TreeGrafter"/>
</dbReference>
<dbReference type="GO" id="GO:0016682">
    <property type="term" value="F:oxidoreductase activity, acting on diphenols and related substances as donors, oxygen as acceptor"/>
    <property type="evidence" value="ECO:0007669"/>
    <property type="project" value="InterPro"/>
</dbReference>
<dbReference type="GO" id="GO:0015078">
    <property type="term" value="F:proton transmembrane transporter activity"/>
    <property type="evidence" value="ECO:0007669"/>
    <property type="project" value="TreeGrafter"/>
</dbReference>
<dbReference type="GO" id="GO:0019646">
    <property type="term" value="P:aerobic electron transport chain"/>
    <property type="evidence" value="ECO:0007669"/>
    <property type="project" value="TreeGrafter"/>
</dbReference>
<dbReference type="GO" id="GO:0042773">
    <property type="term" value="P:ATP synthesis coupled electron transport"/>
    <property type="evidence" value="ECO:0007669"/>
    <property type="project" value="InterPro"/>
</dbReference>
<dbReference type="GO" id="GO:0015990">
    <property type="term" value="P:electron transport coupled proton transport"/>
    <property type="evidence" value="ECO:0007669"/>
    <property type="project" value="TreeGrafter"/>
</dbReference>
<dbReference type="InterPro" id="IPR005171">
    <property type="entry name" value="Cyt_c_oxidase_su4_prok"/>
</dbReference>
<dbReference type="InterPro" id="IPR050968">
    <property type="entry name" value="Cytochrome_c_oxidase_bac_sub4"/>
</dbReference>
<dbReference type="InterPro" id="IPR014250">
    <property type="entry name" value="QoxD"/>
</dbReference>
<dbReference type="NCBIfam" id="TIGR02901">
    <property type="entry name" value="QoxD"/>
    <property type="match status" value="1"/>
</dbReference>
<dbReference type="PANTHER" id="PTHR36835">
    <property type="entry name" value="CYTOCHROME BO(3) UBIQUINOL OXIDASE SUBUNIT 4"/>
    <property type="match status" value="1"/>
</dbReference>
<dbReference type="PANTHER" id="PTHR36835:SF1">
    <property type="entry name" value="CYTOCHROME BO(3) UBIQUINOL OXIDASE SUBUNIT 4"/>
    <property type="match status" value="1"/>
</dbReference>
<dbReference type="Pfam" id="PF03626">
    <property type="entry name" value="COX4_pro"/>
    <property type="match status" value="1"/>
</dbReference>
<proteinExistence type="inferred from homology"/>
<protein>
    <recommendedName>
        <fullName>Probable quinol oxidase subunit 4</fullName>
        <ecNumber>1.10.3.-</ecNumber>
    </recommendedName>
    <alternativeName>
        <fullName>Quinol oxidase polypeptide IV</fullName>
    </alternativeName>
</protein>
<reference key="1">
    <citation type="journal article" date="2005" name="Proc. Natl. Acad. Sci. U.S.A.">
        <title>Whole genome sequence of Staphylococcus saprophyticus reveals the pathogenesis of uncomplicated urinary tract infection.</title>
        <authorList>
            <person name="Kuroda M."/>
            <person name="Yamashita A."/>
            <person name="Hirakawa H."/>
            <person name="Kumano M."/>
            <person name="Morikawa K."/>
            <person name="Higashide M."/>
            <person name="Maruyama A."/>
            <person name="Inose Y."/>
            <person name="Matoba K."/>
            <person name="Toh H."/>
            <person name="Kuhara S."/>
            <person name="Hattori M."/>
            <person name="Ohta T."/>
        </authorList>
    </citation>
    <scope>NUCLEOTIDE SEQUENCE [LARGE SCALE GENOMIC DNA]</scope>
    <source>
        <strain>ATCC 15305 / DSM 20229 / NCIMB 8711 / NCTC 7292 / S-41</strain>
    </source>
</reference>
<feature type="chain" id="PRO_0000275869" description="Probable quinol oxidase subunit 4">
    <location>
        <begin position="1"/>
        <end position="96"/>
    </location>
</feature>
<feature type="transmembrane region" description="Helical" evidence="2">
    <location>
        <begin position="8"/>
        <end position="28"/>
    </location>
</feature>
<feature type="transmembrane region" description="Helical" evidence="2">
    <location>
        <begin position="36"/>
        <end position="56"/>
    </location>
</feature>
<feature type="transmembrane region" description="Helical" evidence="2">
    <location>
        <begin position="68"/>
        <end position="88"/>
    </location>
</feature>
<accession>Q49WI1</accession>
<name>QOX4_STAS1</name>
<gene>
    <name type="primary">qoxD</name>
    <name type="ordered locus">SSP1733</name>
</gene>
<sequence>MNTIVKHTVGFIASIVLTILAVFVTLYTSMALNAKITIIFGFAFIQAAVQLLMFMHLTESKDGNLQTFKVLFAIIITLITVIGTYWVMQGGHSSHL</sequence>
<comment type="function">
    <text evidence="1">Catalyzes quinol oxidation with the concomitant reduction of oxygen to water.</text>
</comment>
<comment type="catalytic activity">
    <reaction>
        <text>2 a quinol + O2 = 2 a quinone + 2 H2O</text>
        <dbReference type="Rhea" id="RHEA:55376"/>
        <dbReference type="ChEBI" id="CHEBI:15377"/>
        <dbReference type="ChEBI" id="CHEBI:15379"/>
        <dbReference type="ChEBI" id="CHEBI:24646"/>
        <dbReference type="ChEBI" id="CHEBI:132124"/>
    </reaction>
</comment>
<comment type="subcellular location">
    <subcellularLocation>
        <location evidence="1">Cell membrane</location>
        <topology evidence="1">Multi-pass membrane protein</topology>
    </subcellularLocation>
</comment>
<comment type="similarity">
    <text evidence="3">Belongs to the cytochrome c oxidase bacterial subunit 4 family.</text>
</comment>
<evidence type="ECO:0000250" key="1"/>
<evidence type="ECO:0000255" key="2"/>
<evidence type="ECO:0000305" key="3"/>
<keyword id="KW-1003">Cell membrane</keyword>
<keyword id="KW-0472">Membrane</keyword>
<keyword id="KW-0560">Oxidoreductase</keyword>
<keyword id="KW-1185">Reference proteome</keyword>
<keyword id="KW-0812">Transmembrane</keyword>
<keyword id="KW-1133">Transmembrane helix</keyword>